<protein>
    <recommendedName>
        <fullName evidence="5">Homoarginine-6-hydroxylase 2-ODD-C23.2</fullName>
        <ecNumber evidence="1 3">1.14.11.-</ecNumber>
    </recommendedName>
    <alternativeName>
        <fullName evidence="5">2-oxoglutarate-dependent dioxygenase C23.2</fullName>
        <shortName evidence="5">At2-ODD-C23.2</shortName>
        <ecNumber evidence="1 3">1.14.11.-</ecNumber>
    </alternativeName>
    <alternativeName>
        <fullName evidence="5">Arginine-5-hydroxylase 2-ODD-C23.2</fullName>
        <ecNumber evidence="1 3">1.14.11.-</ecNumber>
    </alternativeName>
    <alternativeName>
        <fullName evidence="4">Protein DARK-INDUCIBLE 11</fullName>
    </alternativeName>
</protein>
<proteinExistence type="evidence at protein level"/>
<feature type="chain" id="PRO_0000428721" description="Homoarginine-6-hydroxylase 2-ODD-C23.2">
    <location>
        <begin position="1"/>
        <end position="357"/>
    </location>
</feature>
<feature type="domain" description="Fe2OG dioxygenase" evidence="1">
    <location>
        <begin position="208"/>
        <end position="308"/>
    </location>
</feature>
<feature type="binding site" evidence="1">
    <location>
        <position position="231"/>
    </location>
    <ligand>
        <name>Fe cation</name>
        <dbReference type="ChEBI" id="CHEBI:24875"/>
    </ligand>
</feature>
<feature type="binding site" evidence="1">
    <location>
        <position position="233"/>
    </location>
    <ligand>
        <name>Fe cation</name>
        <dbReference type="ChEBI" id="CHEBI:24875"/>
    </ligand>
</feature>
<feature type="binding site" evidence="1">
    <location>
        <position position="289"/>
    </location>
    <ligand>
        <name>Fe cation</name>
        <dbReference type="ChEBI" id="CHEBI:24875"/>
    </ligand>
</feature>
<feature type="binding site" evidence="1">
    <location>
        <position position="299"/>
    </location>
    <ligand>
        <name>2-oxoglutarate</name>
        <dbReference type="ChEBI" id="CHEBI:16810"/>
    </ligand>
</feature>
<gene>
    <name evidence="5" type="primary">2ODDC23.2</name>
    <name evidence="4" type="synonym">DIN11</name>
    <name evidence="7" type="ordered locus">At3g49620</name>
    <name evidence="8" type="ORF">T9C5.210</name>
</gene>
<organism>
    <name type="scientific">Arabidopsis thaliana</name>
    <name type="common">Mouse-ear cress</name>
    <dbReference type="NCBI Taxonomy" id="3702"/>
    <lineage>
        <taxon>Eukaryota</taxon>
        <taxon>Viridiplantae</taxon>
        <taxon>Streptophyta</taxon>
        <taxon>Embryophyta</taxon>
        <taxon>Tracheophyta</taxon>
        <taxon>Spermatophyta</taxon>
        <taxon>Magnoliopsida</taxon>
        <taxon>eudicotyledons</taxon>
        <taxon>Gunneridae</taxon>
        <taxon>Pentapetalae</taxon>
        <taxon>rosids</taxon>
        <taxon>malvids</taxon>
        <taxon>Brassicales</taxon>
        <taxon>Brassicaceae</taxon>
        <taxon>Camelineae</taxon>
        <taxon>Arabidopsis</taxon>
    </lineage>
</organism>
<evidence type="ECO:0000255" key="1">
    <source>
        <dbReference type="PROSITE-ProRule" id="PRU00805"/>
    </source>
</evidence>
<evidence type="ECO:0000269" key="2">
    <source>
    </source>
</evidence>
<evidence type="ECO:0000269" key="3">
    <source>
    </source>
</evidence>
<evidence type="ECO:0000303" key="4">
    <source>
    </source>
</evidence>
<evidence type="ECO:0000303" key="5">
    <source>
    </source>
</evidence>
<evidence type="ECO:0000305" key="6"/>
<evidence type="ECO:0000312" key="7">
    <source>
        <dbReference type="Araport" id="AT3G49620"/>
    </source>
</evidence>
<evidence type="ECO:0000312" key="8">
    <source>
        <dbReference type="EMBL" id="CAB62466.1"/>
    </source>
</evidence>
<sequence>MVIYHRKVVFTYVRAKRFYHFLNIEMVTDFKSLLPVIDISPLLAKCDDFDMAEDAGVVEVVGKLDRACRDVGFFYVIGHGISDDLINKVKEMTHQFFELPYEEKLKIKITPTAGYRGYQRIGVNFTSGKQDMHEAIDCYREFKQGKHGDIGKVLEGPNQWPGNPQEYKDLMEKYIKLCTDLSRNILRGISLALGGSPYEFEGKMLRDPFWVMRIIGYPGVNQENVIGCGAHTDYGLLTLINQDDDKTALQVKNVDGDWIPAIPIPGSFICNIGDMLTILSNGVYQSTLHKVINNSPKYRVCVAFFYETNFEAEVEPLDIFKEKHPRKETSQVAKRVVYGQHLINKVLTTFANLVENS</sequence>
<keyword id="KW-0963">Cytoplasm</keyword>
<keyword id="KW-0223">Dioxygenase</keyword>
<keyword id="KW-0408">Iron</keyword>
<keyword id="KW-0479">Metal-binding</keyword>
<keyword id="KW-0560">Oxidoreductase</keyword>
<keyword id="KW-1185">Reference proteome</keyword>
<name>OD232_ARATH</name>
<reference key="1">
    <citation type="journal article" date="2000" name="Nature">
        <title>Sequence and analysis of chromosome 3 of the plant Arabidopsis thaliana.</title>
        <authorList>
            <person name="Salanoubat M."/>
            <person name="Lemcke K."/>
            <person name="Rieger M."/>
            <person name="Ansorge W."/>
            <person name="Unseld M."/>
            <person name="Fartmann B."/>
            <person name="Valle G."/>
            <person name="Bloecker H."/>
            <person name="Perez-Alonso M."/>
            <person name="Obermaier B."/>
            <person name="Delseny M."/>
            <person name="Boutry M."/>
            <person name="Grivell L.A."/>
            <person name="Mache R."/>
            <person name="Puigdomenech P."/>
            <person name="De Simone V."/>
            <person name="Choisne N."/>
            <person name="Artiguenave F."/>
            <person name="Robert C."/>
            <person name="Brottier P."/>
            <person name="Wincker P."/>
            <person name="Cattolico L."/>
            <person name="Weissenbach J."/>
            <person name="Saurin W."/>
            <person name="Quetier F."/>
            <person name="Schaefer M."/>
            <person name="Mueller-Auer S."/>
            <person name="Gabel C."/>
            <person name="Fuchs M."/>
            <person name="Benes V."/>
            <person name="Wurmbach E."/>
            <person name="Drzonek H."/>
            <person name="Erfle H."/>
            <person name="Jordan N."/>
            <person name="Bangert S."/>
            <person name="Wiedelmann R."/>
            <person name="Kranz H."/>
            <person name="Voss H."/>
            <person name="Holland R."/>
            <person name="Brandt P."/>
            <person name="Nyakatura G."/>
            <person name="Vezzi A."/>
            <person name="D'Angelo M."/>
            <person name="Pallavicini A."/>
            <person name="Toppo S."/>
            <person name="Simionati B."/>
            <person name="Conrad A."/>
            <person name="Hornischer K."/>
            <person name="Kauer G."/>
            <person name="Loehnert T.-H."/>
            <person name="Nordsiek G."/>
            <person name="Reichelt J."/>
            <person name="Scharfe M."/>
            <person name="Schoen O."/>
            <person name="Bargues M."/>
            <person name="Terol J."/>
            <person name="Climent J."/>
            <person name="Navarro P."/>
            <person name="Collado C."/>
            <person name="Perez-Perez A."/>
            <person name="Ottenwaelder B."/>
            <person name="Duchemin D."/>
            <person name="Cooke R."/>
            <person name="Laudie M."/>
            <person name="Berger-Llauro C."/>
            <person name="Purnelle B."/>
            <person name="Masuy D."/>
            <person name="de Haan M."/>
            <person name="Maarse A.C."/>
            <person name="Alcaraz J.-P."/>
            <person name="Cottet A."/>
            <person name="Casacuberta E."/>
            <person name="Monfort A."/>
            <person name="Argiriou A."/>
            <person name="Flores M."/>
            <person name="Liguori R."/>
            <person name="Vitale D."/>
            <person name="Mannhaupt G."/>
            <person name="Haase D."/>
            <person name="Schoof H."/>
            <person name="Rudd S."/>
            <person name="Zaccaria P."/>
            <person name="Mewes H.-W."/>
            <person name="Mayer K.F.X."/>
            <person name="Kaul S."/>
            <person name="Town C.D."/>
            <person name="Koo H.L."/>
            <person name="Tallon L.J."/>
            <person name="Jenkins J."/>
            <person name="Rooney T."/>
            <person name="Rizzo M."/>
            <person name="Walts A."/>
            <person name="Utterback T."/>
            <person name="Fujii C.Y."/>
            <person name="Shea T.P."/>
            <person name="Creasy T.H."/>
            <person name="Haas B."/>
            <person name="Maiti R."/>
            <person name="Wu D."/>
            <person name="Peterson J."/>
            <person name="Van Aken S."/>
            <person name="Pai G."/>
            <person name="Militscher J."/>
            <person name="Sellers P."/>
            <person name="Gill J.E."/>
            <person name="Feldblyum T.V."/>
            <person name="Preuss D."/>
            <person name="Lin X."/>
            <person name="Nierman W.C."/>
            <person name="Salzberg S.L."/>
            <person name="White O."/>
            <person name="Venter J.C."/>
            <person name="Fraser C.M."/>
            <person name="Kaneko T."/>
            <person name="Nakamura Y."/>
            <person name="Sato S."/>
            <person name="Kato T."/>
            <person name="Asamizu E."/>
            <person name="Sasamoto S."/>
            <person name="Kimura T."/>
            <person name="Idesawa K."/>
            <person name="Kawashima K."/>
            <person name="Kishida Y."/>
            <person name="Kiyokawa C."/>
            <person name="Kohara M."/>
            <person name="Matsumoto M."/>
            <person name="Matsuno A."/>
            <person name="Muraki A."/>
            <person name="Nakayama S."/>
            <person name="Nakazaki N."/>
            <person name="Shinpo S."/>
            <person name="Takeuchi C."/>
            <person name="Wada T."/>
            <person name="Watanabe A."/>
            <person name="Yamada M."/>
            <person name="Yasuda M."/>
            <person name="Tabata S."/>
        </authorList>
    </citation>
    <scope>NUCLEOTIDE SEQUENCE [LARGE SCALE GENOMIC DNA]</scope>
    <source>
        <strain>cv. Columbia</strain>
    </source>
</reference>
<reference key="2">
    <citation type="journal article" date="2017" name="Plant J.">
        <title>Araport11: a complete reannotation of the Arabidopsis thaliana reference genome.</title>
        <authorList>
            <person name="Cheng C.Y."/>
            <person name="Krishnakumar V."/>
            <person name="Chan A.P."/>
            <person name="Thibaud-Nissen F."/>
            <person name="Schobel S."/>
            <person name="Town C.D."/>
        </authorList>
    </citation>
    <scope>GENOME REANNOTATION</scope>
    <source>
        <strain>cv. Columbia</strain>
    </source>
</reference>
<reference key="3">
    <citation type="journal article" date="2003" name="Science">
        <title>Empirical analysis of transcriptional activity in the Arabidopsis genome.</title>
        <authorList>
            <person name="Yamada K."/>
            <person name="Lim J."/>
            <person name="Dale J.M."/>
            <person name="Chen H."/>
            <person name="Shinn P."/>
            <person name="Palm C.J."/>
            <person name="Southwick A.M."/>
            <person name="Wu H.C."/>
            <person name="Kim C.J."/>
            <person name="Nguyen M."/>
            <person name="Pham P.K."/>
            <person name="Cheuk R.F."/>
            <person name="Karlin-Newmann G."/>
            <person name="Liu S.X."/>
            <person name="Lam B."/>
            <person name="Sakano H."/>
            <person name="Wu T."/>
            <person name="Yu G."/>
            <person name="Miranda M."/>
            <person name="Quach H.L."/>
            <person name="Tripp M."/>
            <person name="Chang C.H."/>
            <person name="Lee J.M."/>
            <person name="Toriumi M.J."/>
            <person name="Chan M.M."/>
            <person name="Tang C.C."/>
            <person name="Onodera C.S."/>
            <person name="Deng J.M."/>
            <person name="Akiyama K."/>
            <person name="Ansari Y."/>
            <person name="Arakawa T."/>
            <person name="Banh J."/>
            <person name="Banno F."/>
            <person name="Bowser L."/>
            <person name="Brooks S.Y."/>
            <person name="Carninci P."/>
            <person name="Chao Q."/>
            <person name="Choy N."/>
            <person name="Enju A."/>
            <person name="Goldsmith A.D."/>
            <person name="Gurjal M."/>
            <person name="Hansen N.F."/>
            <person name="Hayashizaki Y."/>
            <person name="Johnson-Hopson C."/>
            <person name="Hsuan V.W."/>
            <person name="Iida K."/>
            <person name="Karnes M."/>
            <person name="Khan S."/>
            <person name="Koesema E."/>
            <person name="Ishida J."/>
            <person name="Jiang P.X."/>
            <person name="Jones T."/>
            <person name="Kawai J."/>
            <person name="Kamiya A."/>
            <person name="Meyers C."/>
            <person name="Nakajima M."/>
            <person name="Narusaka M."/>
            <person name="Seki M."/>
            <person name="Sakurai T."/>
            <person name="Satou M."/>
            <person name="Tamse R."/>
            <person name="Vaysberg M."/>
            <person name="Wallender E.K."/>
            <person name="Wong C."/>
            <person name="Yamamura Y."/>
            <person name="Yuan S."/>
            <person name="Shinozaki K."/>
            <person name="Davis R.W."/>
            <person name="Theologis A."/>
            <person name="Ecker J.R."/>
        </authorList>
    </citation>
    <scope>NUCLEOTIDE SEQUENCE [LARGE SCALE MRNA]</scope>
    <source>
        <strain>cv. Columbia</strain>
    </source>
</reference>
<reference key="4">
    <citation type="journal article" date="2001" name="Physiol. Plantarum">
        <title>Dark-inducible genes from Arabidopsis thaliana are associated with leaf senescence and repressed by sugars.</title>
        <authorList>
            <person name="Fujiki Y."/>
            <person name="Yoshikawa Y."/>
            <person name="Sato T."/>
            <person name="Inada N."/>
            <person name="Ito M."/>
            <person name="Nishida I."/>
            <person name="Watanabe A."/>
        </authorList>
    </citation>
    <scope>NUCLEOTIDE SEQUENCE [MRNA] OF 1-148</scope>
    <scope>TISSUE SPECIFICITY</scope>
    <scope>INDUCTION</scope>
</reference>
<reference key="5">
    <citation type="journal article" date="2024" name="Elife">
        <title>Guanidine production by plant homoarginine-6-hydroxylases.</title>
        <authorList>
            <person name="Funck D."/>
            <person name="Sinn M."/>
            <person name="Forlani G."/>
            <person name="Hartig J.S."/>
        </authorList>
    </citation>
    <scope>FUNCTION</scope>
    <scope>CATALYTIC ACTIVITY</scope>
    <scope>DISRUPTION PHENOTYPE</scope>
    <scope>INDUCTION BY METHYL JASMONATE</scope>
    <scope>BIOPHYSICOCHEMICAL PROPERTIES</scope>
    <scope>ACTIVITY REGULATION</scope>
    <scope>SUBCELLULAR LOCATION</scope>
    <source>
        <strain>cv. Columbia</strain>
    </source>
</reference>
<accession>Q8H113</accession>
<accession>Q8RXJ6</accession>
<accession>Q9FVM1</accession>
<accession>Q9SCJ7</accession>
<comment type="function">
    <text evidence="3">2-oxoglutarate-dependent dioxygenase catalyzing homoarginine 6-hydroxylation and arginine-5-hydroxylation thus producing 6-hydroxy-L-homoarginine and 5-hydroxy-L-arginine, respectively (PubMed:38619227). Guanidine (Gd) is in turn synthesized by the spontaneous conversion of 6-hydroxy-L-homoarginine and 5-hydroxy-L-arginine to (S)-2-amino-6-oxohexanoate (RHEA:79843) and L-glutamate 5-semialdehyde (RHEA:31527); guanidine is a nitrogen-rich compound that may serve as a defense or signaling substance (PubMed:38619227).</text>
</comment>
<comment type="catalytic activity">
    <reaction evidence="3">
        <text>L-homoarginine + 2-oxoglutarate + O2 = 6-hydroxy-L-homoarginine + succinate + CO2</text>
        <dbReference type="Rhea" id="RHEA:79839"/>
        <dbReference type="ChEBI" id="CHEBI:15379"/>
        <dbReference type="ChEBI" id="CHEBI:16526"/>
        <dbReference type="ChEBI" id="CHEBI:16810"/>
        <dbReference type="ChEBI" id="CHEBI:30031"/>
        <dbReference type="ChEBI" id="CHEBI:143006"/>
        <dbReference type="ChEBI" id="CHEBI:231270"/>
    </reaction>
</comment>
<comment type="catalytic activity">
    <reaction evidence="3">
        <text>L-arginine + 2-oxoglutarate + O2 = 5-hydroxy-L-arginine + succinate + CO2</text>
        <dbReference type="Rhea" id="RHEA:31531"/>
        <dbReference type="ChEBI" id="CHEBI:15379"/>
        <dbReference type="ChEBI" id="CHEBI:16526"/>
        <dbReference type="ChEBI" id="CHEBI:16810"/>
        <dbReference type="ChEBI" id="CHEBI:30031"/>
        <dbReference type="ChEBI" id="CHEBI:32682"/>
        <dbReference type="ChEBI" id="CHEBI:231271"/>
    </reaction>
</comment>
<comment type="cofactor">
    <cofactor evidence="1">
        <name>Fe(2+)</name>
        <dbReference type="ChEBI" id="CHEBI:29033"/>
    </cofactor>
    <text evidence="1">Binds 1 Fe(2+) ion per subunit.</text>
</comment>
<comment type="activity regulation">
    <text evidence="3">Slightly inhibited by canavanine (Can), the 5-oxa-analog of arginine.</text>
</comment>
<comment type="biophysicochemical properties">
    <kinetics>
        <KM evidence="3">1.9 mM for homoarginine</KM>
        <KM evidence="3">6 mM for arginine</KM>
    </kinetics>
</comment>
<comment type="subcellular location">
    <subcellularLocation>
        <location evidence="3">Cytoplasm</location>
        <location evidence="3">Cytosol</location>
    </subcellularLocation>
</comment>
<comment type="tissue specificity">
    <text evidence="2">Expressed in senescent leaves.</text>
</comment>
<comment type="induction">
    <text evidence="2 3">By dark (PubMed:11240919). Triggered by methyl jasmonate (MeJA) (PubMed:38619227).</text>
</comment>
<comment type="disruption phenotype">
    <text evidence="3">Lost accumulation of guanidine in response to methyl jasmonate treatment (MeJA) (PubMed:38619227). Plants missing 2ODDC23.1, 2ODDC23.2 and 2ODDC23.3 produce reduced guanidine content (PubMed:38619227).</text>
</comment>
<comment type="similarity">
    <text evidence="6">Belongs to the iron/ascorbate-dependent oxidoreductase family.</text>
</comment>
<comment type="sequence caution" evidence="6">
    <conflict type="erroneous initiation">
        <sequence resource="EMBL-CDS" id="CAB62466"/>
    </conflict>
    <text>Truncated N-terminus.</text>
</comment>
<dbReference type="EC" id="1.14.11.-" evidence="1 3"/>
<dbReference type="EMBL" id="AL132964">
    <property type="protein sequence ID" value="CAB62466.1"/>
    <property type="status" value="ALT_INIT"/>
    <property type="molecule type" value="Genomic_DNA"/>
</dbReference>
<dbReference type="EMBL" id="CP002686">
    <property type="protein sequence ID" value="AEE78567.1"/>
    <property type="molecule type" value="Genomic_DNA"/>
</dbReference>
<dbReference type="EMBL" id="AY080850">
    <property type="protein sequence ID" value="AAL87324.1"/>
    <property type="molecule type" value="mRNA"/>
</dbReference>
<dbReference type="EMBL" id="BT000898">
    <property type="protein sequence ID" value="AAN41298.1"/>
    <property type="molecule type" value="mRNA"/>
</dbReference>
<dbReference type="EMBL" id="AF159379">
    <property type="protein sequence ID" value="AAG23722.1"/>
    <property type="molecule type" value="mRNA"/>
</dbReference>
<dbReference type="PIR" id="T46239">
    <property type="entry name" value="T46239"/>
</dbReference>
<dbReference type="RefSeq" id="NP_190531.2">
    <property type="nucleotide sequence ID" value="NM_114822.5"/>
</dbReference>
<dbReference type="SMR" id="Q8H113"/>
<dbReference type="FunCoup" id="Q8H113">
    <property type="interactions" value="3"/>
</dbReference>
<dbReference type="STRING" id="3702.Q8H113"/>
<dbReference type="GlyGen" id="Q8H113">
    <property type="glycosylation" value="1 site"/>
</dbReference>
<dbReference type="PaxDb" id="3702-AT3G49620.1"/>
<dbReference type="ProteomicsDB" id="241226"/>
<dbReference type="EnsemblPlants" id="AT3G49620.1">
    <property type="protein sequence ID" value="AT3G49620.1"/>
    <property type="gene ID" value="AT3G49620"/>
</dbReference>
<dbReference type="GeneID" id="824124"/>
<dbReference type="Gramene" id="AT3G49620.1">
    <property type="protein sequence ID" value="AT3G49620.1"/>
    <property type="gene ID" value="AT3G49620"/>
</dbReference>
<dbReference type="KEGG" id="ath:AT3G49620"/>
<dbReference type="Araport" id="AT3G49620"/>
<dbReference type="TAIR" id="AT3G49620">
    <property type="gene designation" value="DIN11"/>
</dbReference>
<dbReference type="eggNOG" id="KOG0143">
    <property type="taxonomic scope" value="Eukaryota"/>
</dbReference>
<dbReference type="HOGENOM" id="CLU_010119_6_0_1"/>
<dbReference type="InParanoid" id="Q8H113"/>
<dbReference type="OMA" id="DESFWVM"/>
<dbReference type="PhylomeDB" id="Q8H113"/>
<dbReference type="BioCyc" id="ARA:AT3G49620-MONOMER"/>
<dbReference type="PRO" id="PR:Q8H113"/>
<dbReference type="Proteomes" id="UP000006548">
    <property type="component" value="Chromosome 3"/>
</dbReference>
<dbReference type="ExpressionAtlas" id="Q8H113">
    <property type="expression patterns" value="baseline and differential"/>
</dbReference>
<dbReference type="GO" id="GO:0005829">
    <property type="term" value="C:cytosol"/>
    <property type="evidence" value="ECO:0000314"/>
    <property type="project" value="UniProtKB"/>
</dbReference>
<dbReference type="GO" id="GO:0016706">
    <property type="term" value="F:2-oxoglutarate-dependent dioxygenase activity"/>
    <property type="evidence" value="ECO:0000314"/>
    <property type="project" value="UniProtKB"/>
</dbReference>
<dbReference type="GO" id="GO:0046872">
    <property type="term" value="F:metal ion binding"/>
    <property type="evidence" value="ECO:0007669"/>
    <property type="project" value="UniProtKB-KW"/>
</dbReference>
<dbReference type="FunFam" id="2.60.120.330:FF:000024">
    <property type="entry name" value="Probable 2-oxoglutarate-dependent dioxygenase At3g49630"/>
    <property type="match status" value="1"/>
</dbReference>
<dbReference type="Gene3D" id="2.60.120.330">
    <property type="entry name" value="B-lactam Antibiotic, Isopenicillin N Synthase, Chain"/>
    <property type="match status" value="1"/>
</dbReference>
<dbReference type="InterPro" id="IPR026992">
    <property type="entry name" value="DIOX_N"/>
</dbReference>
<dbReference type="InterPro" id="IPR044861">
    <property type="entry name" value="IPNS-like_FE2OG_OXY"/>
</dbReference>
<dbReference type="InterPro" id="IPR027443">
    <property type="entry name" value="IPNS-like_sf"/>
</dbReference>
<dbReference type="InterPro" id="IPR050231">
    <property type="entry name" value="Iron_ascorbate_oxido_reductase"/>
</dbReference>
<dbReference type="InterPro" id="IPR005123">
    <property type="entry name" value="Oxoglu/Fe-dep_dioxygenase_dom"/>
</dbReference>
<dbReference type="PANTHER" id="PTHR47990">
    <property type="entry name" value="2-OXOGLUTARATE (2OG) AND FE(II)-DEPENDENT OXYGENASE SUPERFAMILY PROTEIN-RELATED"/>
    <property type="match status" value="1"/>
</dbReference>
<dbReference type="Pfam" id="PF03171">
    <property type="entry name" value="2OG-FeII_Oxy"/>
    <property type="match status" value="1"/>
</dbReference>
<dbReference type="Pfam" id="PF14226">
    <property type="entry name" value="DIOX_N"/>
    <property type="match status" value="1"/>
</dbReference>
<dbReference type="PRINTS" id="PR00682">
    <property type="entry name" value="IPNSYNTHASE"/>
</dbReference>
<dbReference type="SUPFAM" id="SSF51197">
    <property type="entry name" value="Clavaminate synthase-like"/>
    <property type="match status" value="1"/>
</dbReference>
<dbReference type="PROSITE" id="PS51471">
    <property type="entry name" value="FE2OG_OXY"/>
    <property type="match status" value="1"/>
</dbReference>